<proteinExistence type="evidence at protein level"/>
<feature type="chain" id="PRO_0000209360" description="Sugar efflux transporter B">
    <location>
        <begin position="1"/>
        <end position="393"/>
    </location>
</feature>
<feature type="transmembrane region" description="Helical" evidence="1">
    <location>
        <begin position="13"/>
        <end position="33"/>
    </location>
</feature>
<feature type="transmembrane region" description="Helical" evidence="1">
    <location>
        <begin position="51"/>
        <end position="71"/>
    </location>
</feature>
<feature type="transmembrane region" description="Helical" evidence="1">
    <location>
        <begin position="82"/>
        <end position="102"/>
    </location>
</feature>
<feature type="transmembrane region" description="Helical" evidence="1">
    <location>
        <begin position="106"/>
        <end position="126"/>
    </location>
</feature>
<feature type="transmembrane region" description="Helical" evidence="1">
    <location>
        <begin position="152"/>
        <end position="172"/>
    </location>
</feature>
<feature type="transmembrane region" description="Helical" evidence="1">
    <location>
        <begin position="174"/>
        <end position="194"/>
    </location>
</feature>
<feature type="transmembrane region" description="Helical" evidence="1">
    <location>
        <begin position="219"/>
        <end position="239"/>
    </location>
</feature>
<feature type="transmembrane region" description="Helical" evidence="1">
    <location>
        <begin position="253"/>
        <end position="273"/>
    </location>
</feature>
<feature type="transmembrane region" description="Helical" evidence="1">
    <location>
        <begin position="283"/>
        <end position="303"/>
    </location>
</feature>
<feature type="transmembrane region" description="Helical" evidence="1">
    <location>
        <begin position="306"/>
        <end position="326"/>
    </location>
</feature>
<feature type="transmembrane region" description="Helical" evidence="1">
    <location>
        <begin position="344"/>
        <end position="364"/>
    </location>
</feature>
<feature type="transmembrane region" description="Helical" evidence="1">
    <location>
        <begin position="366"/>
        <end position="386"/>
    </location>
</feature>
<gene>
    <name type="primary">setB</name>
    <name type="synonym">yeiO</name>
    <name type="ordered locus">b2170</name>
    <name type="ordered locus">JW2157</name>
</gene>
<reference key="1">
    <citation type="submission" date="1993-10" db="EMBL/GenBank/DDBJ databases">
        <title>Automated multiplex sequencing of the E.coli genome.</title>
        <authorList>
            <person name="Richterich P."/>
            <person name="Lakey N."/>
            <person name="Gryan G."/>
            <person name="Jaehn L."/>
            <person name="Mintz L."/>
            <person name="Robison K."/>
            <person name="Church G.M."/>
        </authorList>
    </citation>
    <scope>NUCLEOTIDE SEQUENCE [LARGE SCALE GENOMIC DNA]</scope>
    <source>
        <strain>K12 / BHB2600</strain>
    </source>
</reference>
<reference key="2">
    <citation type="journal article" date="1996" name="DNA Res.">
        <title>A 460-kb DNA sequence of the Escherichia coli K-12 genome corresponding to the 40.1-50.0 min region on the linkage map.</title>
        <authorList>
            <person name="Itoh T."/>
            <person name="Aiba H."/>
            <person name="Baba T."/>
            <person name="Fujita K."/>
            <person name="Hayashi K."/>
            <person name="Inada T."/>
            <person name="Isono K."/>
            <person name="Kasai H."/>
            <person name="Kimura S."/>
            <person name="Kitakawa M."/>
            <person name="Kitagawa M."/>
            <person name="Makino K."/>
            <person name="Miki T."/>
            <person name="Mizobuchi K."/>
            <person name="Mori H."/>
            <person name="Mori T."/>
            <person name="Motomura K."/>
            <person name="Nakade S."/>
            <person name="Nakamura Y."/>
            <person name="Nashimoto H."/>
            <person name="Nishio Y."/>
            <person name="Oshima T."/>
            <person name="Saito N."/>
            <person name="Sampei G."/>
            <person name="Seki Y."/>
            <person name="Sivasundaram S."/>
            <person name="Tagami H."/>
            <person name="Takeda J."/>
            <person name="Takemoto K."/>
            <person name="Wada C."/>
            <person name="Yamamoto Y."/>
            <person name="Horiuchi T."/>
        </authorList>
    </citation>
    <scope>NUCLEOTIDE SEQUENCE [LARGE SCALE GENOMIC DNA]</scope>
    <source>
        <strain>K12 / W3110 / ATCC 27325 / DSM 5911</strain>
    </source>
</reference>
<reference key="3">
    <citation type="journal article" date="1997" name="Science">
        <title>The complete genome sequence of Escherichia coli K-12.</title>
        <authorList>
            <person name="Blattner F.R."/>
            <person name="Plunkett G. III"/>
            <person name="Bloch C.A."/>
            <person name="Perna N.T."/>
            <person name="Burland V."/>
            <person name="Riley M."/>
            <person name="Collado-Vides J."/>
            <person name="Glasner J.D."/>
            <person name="Rode C.K."/>
            <person name="Mayhew G.F."/>
            <person name="Gregor J."/>
            <person name="Davis N.W."/>
            <person name="Kirkpatrick H.A."/>
            <person name="Goeden M.A."/>
            <person name="Rose D.J."/>
            <person name="Mau B."/>
            <person name="Shao Y."/>
        </authorList>
    </citation>
    <scope>NUCLEOTIDE SEQUENCE [LARGE SCALE GENOMIC DNA]</scope>
    <source>
        <strain>K12 / MG1655 / ATCC 47076</strain>
    </source>
</reference>
<reference key="4">
    <citation type="journal article" date="2006" name="Mol. Syst. Biol.">
        <title>Highly accurate genome sequences of Escherichia coli K-12 strains MG1655 and W3110.</title>
        <authorList>
            <person name="Hayashi K."/>
            <person name="Morooka N."/>
            <person name="Yamamoto Y."/>
            <person name="Fujita K."/>
            <person name="Isono K."/>
            <person name="Choi S."/>
            <person name="Ohtsubo E."/>
            <person name="Baba T."/>
            <person name="Wanner B.L."/>
            <person name="Mori H."/>
            <person name="Horiuchi T."/>
        </authorList>
    </citation>
    <scope>NUCLEOTIDE SEQUENCE [LARGE SCALE GENOMIC DNA]</scope>
    <source>
        <strain>K12 / W3110 / ATCC 27325 / DSM 5911</strain>
    </source>
</reference>
<reference key="5">
    <citation type="journal article" date="1999" name="Mol. Microbiol.">
        <title>The identification of a new family of sugar efflux pumps in Escherichia coli.</title>
        <authorList>
            <person name="Liu J.Y."/>
            <person name="Miller P.F."/>
            <person name="Gosink M."/>
            <person name="Olson E.R."/>
        </authorList>
    </citation>
    <scope>CHARACTERIZATION</scope>
</reference>
<reference key="6">
    <citation type="journal article" date="1999" name="J. Biol. Chem.">
        <title>Functional and biochemical characterization of Escherichia coli sugar efflux transporters.</title>
        <authorList>
            <person name="Liu J.Y."/>
            <person name="Miller P.F."/>
            <person name="Willard J."/>
            <person name="Olson E.R."/>
        </authorList>
    </citation>
    <scope>CHARACTERIZATION</scope>
</reference>
<evidence type="ECO:0000255" key="1"/>
<evidence type="ECO:0000305" key="2"/>
<sequence length="393" mass="42746">MHNSPAVSSAKSFDLTSTAFLIVAFLTGIAGALQTPTLSIFLTDEVHARPAMVGFFFTGSAVIGILVSQFLAGRSDKRGDRKSLIVFCCLLGVLACTLFAWNRNYFVLLFVGVFLSSFGSTANPQMFALAREHADKTGREAVMFSSFLRAQVSLAWVIGPPLAYALAMGFSFTVMYLSAAVAFIVCGVMVWLFLPSMRKELPLATGTIEAPRRNRRDTLLLFVICTLMWGSNSLYIINMPLFIINELHLPEKLAGVMMGTAAGLEIPTMLIAGYFAKRLGKRFLMRVAAVGGVCFYAGMLMAHSPVILLGLQLLNAIFIGILGGIGMLYFQDLMPGQAGSATTLYTNTSRVGWIIAGSVAGIVAEIWNYHAVFWFAMVMIIATLFCLLRIKDV</sequence>
<organism>
    <name type="scientific">Escherichia coli (strain K12)</name>
    <dbReference type="NCBI Taxonomy" id="83333"/>
    <lineage>
        <taxon>Bacteria</taxon>
        <taxon>Pseudomonadati</taxon>
        <taxon>Pseudomonadota</taxon>
        <taxon>Gammaproteobacteria</taxon>
        <taxon>Enterobacterales</taxon>
        <taxon>Enterobacteriaceae</taxon>
        <taxon>Escherichia</taxon>
    </lineage>
</organism>
<dbReference type="EMBL" id="U00007">
    <property type="protein sequence ID" value="AAA60516.1"/>
    <property type="molecule type" value="Genomic_DNA"/>
</dbReference>
<dbReference type="EMBL" id="U00096">
    <property type="protein sequence ID" value="AAC75231.1"/>
    <property type="molecule type" value="Genomic_DNA"/>
</dbReference>
<dbReference type="EMBL" id="AP009048">
    <property type="protein sequence ID" value="BAA15979.1"/>
    <property type="molecule type" value="Genomic_DNA"/>
</dbReference>
<dbReference type="PIR" id="A64986">
    <property type="entry name" value="A64986"/>
</dbReference>
<dbReference type="RefSeq" id="NP_416675.1">
    <property type="nucleotide sequence ID" value="NC_000913.3"/>
</dbReference>
<dbReference type="RefSeq" id="WP_000551980.1">
    <property type="nucleotide sequence ID" value="NZ_LN832404.1"/>
</dbReference>
<dbReference type="SMR" id="P33026"/>
<dbReference type="BioGRID" id="4260465">
    <property type="interactions" value="101"/>
</dbReference>
<dbReference type="FunCoup" id="P33026">
    <property type="interactions" value="22"/>
</dbReference>
<dbReference type="STRING" id="511145.b2170"/>
<dbReference type="TCDB" id="2.A.1.20.2">
    <property type="family name" value="the major facilitator superfamily (mfs)"/>
</dbReference>
<dbReference type="jPOST" id="P33026"/>
<dbReference type="PaxDb" id="511145-b2170"/>
<dbReference type="EnsemblBacteria" id="AAC75231">
    <property type="protein sequence ID" value="AAC75231"/>
    <property type="gene ID" value="b2170"/>
</dbReference>
<dbReference type="GeneID" id="946673"/>
<dbReference type="KEGG" id="ecj:JW2157"/>
<dbReference type="KEGG" id="eco:b2170"/>
<dbReference type="PATRIC" id="fig|1411691.4.peg.68"/>
<dbReference type="EchoBASE" id="EB1969"/>
<dbReference type="eggNOG" id="COG2814">
    <property type="taxonomic scope" value="Bacteria"/>
</dbReference>
<dbReference type="HOGENOM" id="CLU_055598_3_0_6"/>
<dbReference type="InParanoid" id="P33026"/>
<dbReference type="OMA" id="PSMRKEP"/>
<dbReference type="OrthoDB" id="7337792at2"/>
<dbReference type="PhylomeDB" id="P33026"/>
<dbReference type="BioCyc" id="EcoCyc:B2170-MONOMER"/>
<dbReference type="BioCyc" id="MetaCyc:B2170-MONOMER"/>
<dbReference type="PRO" id="PR:P33026"/>
<dbReference type="Proteomes" id="UP000000625">
    <property type="component" value="Chromosome"/>
</dbReference>
<dbReference type="GO" id="GO:0016020">
    <property type="term" value="C:membrane"/>
    <property type="evidence" value="ECO:0000314"/>
    <property type="project" value="EcoliWiki"/>
</dbReference>
<dbReference type="GO" id="GO:0005886">
    <property type="term" value="C:plasma membrane"/>
    <property type="evidence" value="ECO:0000314"/>
    <property type="project" value="EcoCyc"/>
</dbReference>
<dbReference type="GO" id="GO:0005351">
    <property type="term" value="F:carbohydrate:proton symporter activity"/>
    <property type="evidence" value="ECO:0000314"/>
    <property type="project" value="EcoliWiki"/>
</dbReference>
<dbReference type="GO" id="GO:0034219">
    <property type="term" value="P:carbohydrate transmembrane transport"/>
    <property type="evidence" value="ECO:0000315"/>
    <property type="project" value="EcoCyc"/>
</dbReference>
<dbReference type="GO" id="GO:0036448">
    <property type="term" value="P:cellular response to glucose-phosphate stress"/>
    <property type="evidence" value="ECO:0000318"/>
    <property type="project" value="GO_Central"/>
</dbReference>
<dbReference type="GO" id="GO:0007059">
    <property type="term" value="P:chromosome segregation"/>
    <property type="evidence" value="ECO:0000315"/>
    <property type="project" value="EcoliWiki"/>
</dbReference>
<dbReference type="GO" id="GO:1904659">
    <property type="term" value="P:D-glucose transmembrane transport"/>
    <property type="evidence" value="ECO:0000314"/>
    <property type="project" value="EcoliWiki"/>
</dbReference>
<dbReference type="GO" id="GO:0015767">
    <property type="term" value="P:lactose transport"/>
    <property type="evidence" value="ECO:0000314"/>
    <property type="project" value="EcoliWiki"/>
</dbReference>
<dbReference type="CDD" id="cd17471">
    <property type="entry name" value="MFS_Set"/>
    <property type="match status" value="1"/>
</dbReference>
<dbReference type="FunFam" id="1.20.1250.20:FF:000125">
    <property type="entry name" value="Sugar efflux transporter SetB"/>
    <property type="match status" value="1"/>
</dbReference>
<dbReference type="FunFam" id="1.20.1250.20:FF:000151">
    <property type="entry name" value="Sugar efflux transporter SetB"/>
    <property type="match status" value="1"/>
</dbReference>
<dbReference type="Gene3D" id="1.20.1250.20">
    <property type="entry name" value="MFS general substrate transporter like domains"/>
    <property type="match status" value="2"/>
</dbReference>
<dbReference type="InterPro" id="IPR011701">
    <property type="entry name" value="MFS"/>
</dbReference>
<dbReference type="InterPro" id="IPR020846">
    <property type="entry name" value="MFS_dom"/>
</dbReference>
<dbReference type="InterPro" id="IPR036259">
    <property type="entry name" value="MFS_trans_sf"/>
</dbReference>
<dbReference type="InterPro" id="IPR004750">
    <property type="entry name" value="Sugar_efflux"/>
</dbReference>
<dbReference type="NCBIfam" id="TIGR00899">
    <property type="entry name" value="2A0120"/>
    <property type="match status" value="1"/>
</dbReference>
<dbReference type="NCBIfam" id="NF011587">
    <property type="entry name" value="PRK15011.1"/>
    <property type="match status" value="1"/>
</dbReference>
<dbReference type="PANTHER" id="PTHR23535">
    <property type="entry name" value="SUGAR EFFLUX TRANSPORTER A-RELATED"/>
    <property type="match status" value="1"/>
</dbReference>
<dbReference type="PANTHER" id="PTHR23535:SF2">
    <property type="entry name" value="SUGAR EFFLUX TRANSPORTER A-RELATED"/>
    <property type="match status" value="1"/>
</dbReference>
<dbReference type="Pfam" id="PF07690">
    <property type="entry name" value="MFS_1"/>
    <property type="match status" value="1"/>
</dbReference>
<dbReference type="SUPFAM" id="SSF103473">
    <property type="entry name" value="MFS general substrate transporter"/>
    <property type="match status" value="1"/>
</dbReference>
<dbReference type="PROSITE" id="PS50850">
    <property type="entry name" value="MFS"/>
    <property type="match status" value="1"/>
</dbReference>
<comment type="function">
    <text>Involved in the efflux of sugars. The physiological role may be the detoxification of non-metabolizable sugar analogs. Can transport lactose and glucose.</text>
</comment>
<comment type="subcellular location">
    <subcellularLocation>
        <location evidence="2">Cell inner membrane</location>
        <topology evidence="2">Multi-pass membrane protein</topology>
    </subcellularLocation>
</comment>
<comment type="similarity">
    <text evidence="2">Belongs to the major facilitator superfamily. Set transporter family.</text>
</comment>
<accession>P33026</accession>
<protein>
    <recommendedName>
        <fullName>Sugar efflux transporter B</fullName>
    </recommendedName>
</protein>
<keyword id="KW-0997">Cell inner membrane</keyword>
<keyword id="KW-1003">Cell membrane</keyword>
<keyword id="KW-0472">Membrane</keyword>
<keyword id="KW-1185">Reference proteome</keyword>
<keyword id="KW-0762">Sugar transport</keyword>
<keyword id="KW-0812">Transmembrane</keyword>
<keyword id="KW-1133">Transmembrane helix</keyword>
<keyword id="KW-0813">Transport</keyword>
<name>SETB_ECOLI</name>